<evidence type="ECO:0000255" key="1">
    <source>
        <dbReference type="PROSITE-ProRule" id="PRU00448"/>
    </source>
</evidence>
<evidence type="ECO:0000269" key="2">
    <source>
    </source>
</evidence>
<evidence type="ECO:0000305" key="3"/>
<evidence type="ECO:0007829" key="4">
    <source>
        <dbReference type="PDB" id="2KQY"/>
    </source>
</evidence>
<evidence type="ECO:0007829" key="5">
    <source>
        <dbReference type="PDB" id="3FS7"/>
    </source>
</evidence>
<feature type="initiator methionine" description="Removed" evidence="2">
    <location>
        <position position="1"/>
    </location>
</feature>
<feature type="chain" id="PRO_0000073626" description="Parvalbumin, thymic">
    <location>
        <begin position="2"/>
        <end position="109"/>
    </location>
</feature>
<feature type="domain" description="EF-hand 1" evidence="1">
    <location>
        <begin position="39"/>
        <end position="74"/>
    </location>
</feature>
<feature type="domain" description="EF-hand 2" evidence="1">
    <location>
        <begin position="78"/>
        <end position="109"/>
    </location>
</feature>
<feature type="binding site" evidence="1">
    <location>
        <position position="52"/>
    </location>
    <ligand>
        <name>Ca(2+)</name>
        <dbReference type="ChEBI" id="CHEBI:29108"/>
        <label>1</label>
    </ligand>
</feature>
<feature type="binding site" evidence="1">
    <location>
        <position position="54"/>
    </location>
    <ligand>
        <name>Ca(2+)</name>
        <dbReference type="ChEBI" id="CHEBI:29108"/>
        <label>1</label>
    </ligand>
</feature>
<feature type="binding site" evidence="1">
    <location>
        <position position="56"/>
    </location>
    <ligand>
        <name>Ca(2+)</name>
        <dbReference type="ChEBI" id="CHEBI:29108"/>
        <label>1</label>
    </ligand>
</feature>
<feature type="binding site" evidence="1">
    <location>
        <position position="63"/>
    </location>
    <ligand>
        <name>Ca(2+)</name>
        <dbReference type="ChEBI" id="CHEBI:29108"/>
        <label>1</label>
    </ligand>
</feature>
<feature type="binding site" evidence="1">
    <location>
        <position position="91"/>
    </location>
    <ligand>
        <name>Ca(2+)</name>
        <dbReference type="ChEBI" id="CHEBI:29108"/>
        <label>2</label>
    </ligand>
</feature>
<feature type="binding site" evidence="1">
    <location>
        <position position="93"/>
    </location>
    <ligand>
        <name>Ca(2+)</name>
        <dbReference type="ChEBI" id="CHEBI:29108"/>
        <label>2</label>
    </ligand>
</feature>
<feature type="binding site" evidence="1">
    <location>
        <position position="95"/>
    </location>
    <ligand>
        <name>Ca(2+)</name>
        <dbReference type="ChEBI" id="CHEBI:29108"/>
        <label>2</label>
    </ligand>
</feature>
<feature type="binding site" evidence="1">
    <location>
        <position position="97"/>
    </location>
    <ligand>
        <name>Ca(2+)</name>
        <dbReference type="ChEBI" id="CHEBI:29108"/>
        <label>2</label>
    </ligand>
</feature>
<feature type="binding site" evidence="1">
    <location>
        <position position="102"/>
    </location>
    <ligand>
        <name>Ca(2+)</name>
        <dbReference type="ChEBI" id="CHEBI:29108"/>
        <label>2</label>
    </ligand>
</feature>
<feature type="modified residue" description="N-acetylalanine" evidence="2">
    <location>
        <position position="2"/>
    </location>
</feature>
<feature type="sequence conflict" description="In Ref. 4; AAA48606." evidence="3" ref="4">
    <original>G</original>
    <variation>D</variation>
    <location>
        <position position="96"/>
    </location>
</feature>
<feature type="helix" evidence="5">
    <location>
        <begin position="3"/>
        <end position="5"/>
    </location>
</feature>
<feature type="helix" evidence="5">
    <location>
        <begin position="9"/>
        <end position="18"/>
    </location>
</feature>
<feature type="strand" evidence="4">
    <location>
        <begin position="19"/>
        <end position="21"/>
    </location>
</feature>
<feature type="turn" evidence="4">
    <location>
        <begin position="22"/>
        <end position="24"/>
    </location>
</feature>
<feature type="helix" evidence="5">
    <location>
        <begin position="27"/>
        <end position="34"/>
    </location>
</feature>
<feature type="helix" evidence="4">
    <location>
        <begin position="36"/>
        <end position="38"/>
    </location>
</feature>
<feature type="helix" evidence="5">
    <location>
        <begin position="41"/>
        <end position="51"/>
    </location>
</feature>
<feature type="strand" evidence="4">
    <location>
        <begin position="52"/>
        <end position="54"/>
    </location>
</feature>
<feature type="strand" evidence="5">
    <location>
        <begin position="56"/>
        <end position="59"/>
    </location>
</feature>
<feature type="helix" evidence="5">
    <location>
        <begin position="61"/>
        <end position="65"/>
    </location>
</feature>
<feature type="helix" evidence="5">
    <location>
        <begin position="68"/>
        <end position="70"/>
    </location>
</feature>
<feature type="helix" evidence="5">
    <location>
        <begin position="80"/>
        <end position="90"/>
    </location>
</feature>
<feature type="strand" evidence="5">
    <location>
        <begin position="95"/>
        <end position="98"/>
    </location>
</feature>
<feature type="helix" evidence="5">
    <location>
        <begin position="100"/>
        <end position="107"/>
    </location>
</feature>
<organism>
    <name type="scientific">Gallus gallus</name>
    <name type="common">Chicken</name>
    <dbReference type="NCBI Taxonomy" id="9031"/>
    <lineage>
        <taxon>Eukaryota</taxon>
        <taxon>Metazoa</taxon>
        <taxon>Chordata</taxon>
        <taxon>Craniata</taxon>
        <taxon>Vertebrata</taxon>
        <taxon>Euteleostomi</taxon>
        <taxon>Archelosauria</taxon>
        <taxon>Archosauria</taxon>
        <taxon>Dinosauria</taxon>
        <taxon>Saurischia</taxon>
        <taxon>Theropoda</taxon>
        <taxon>Coelurosauria</taxon>
        <taxon>Aves</taxon>
        <taxon>Neognathae</taxon>
        <taxon>Galloanserae</taxon>
        <taxon>Galliformes</taxon>
        <taxon>Phasianidae</taxon>
        <taxon>Phasianinae</taxon>
        <taxon>Gallus</taxon>
    </lineage>
</organism>
<dbReference type="EMBL" id="M94894">
    <property type="protein sequence ID" value="AAA48605.1"/>
    <property type="molecule type" value="mRNA"/>
</dbReference>
<dbReference type="EMBL" id="M34330">
    <property type="protein sequence ID" value="AAA48606.1"/>
    <property type="molecule type" value="mRNA"/>
</dbReference>
<dbReference type="PIR" id="S13911">
    <property type="entry name" value="S13911"/>
</dbReference>
<dbReference type="RefSeq" id="NP_001007478.1">
    <property type="nucleotide sequence ID" value="NM_001007477.4"/>
</dbReference>
<dbReference type="PDB" id="2KQY">
    <property type="method" value="NMR"/>
    <property type="chains" value="A=2-109"/>
</dbReference>
<dbReference type="PDB" id="3FS7">
    <property type="method" value="X-ray"/>
    <property type="resolution" value="1.95 A"/>
    <property type="chains" value="A/B/C/D/E/F/G/H=1-109"/>
</dbReference>
<dbReference type="PDBsum" id="2KQY"/>
<dbReference type="PDBsum" id="3FS7"/>
<dbReference type="BMRB" id="P19753"/>
<dbReference type="SMR" id="P19753"/>
<dbReference type="STRING" id="9031.ENSGALP00000065536"/>
<dbReference type="iPTMnet" id="P19753"/>
<dbReference type="PaxDb" id="9031-ENSGALP00000033676"/>
<dbReference type="Ensembl" id="ENSGALT00010053347.1">
    <property type="protein sequence ID" value="ENSGALP00010032152.1"/>
    <property type="gene ID" value="ENSGALG00010021943.1"/>
</dbReference>
<dbReference type="GeneID" id="396531"/>
<dbReference type="KEGG" id="gga:396531"/>
<dbReference type="CTD" id="396531"/>
<dbReference type="VEuPathDB" id="HostDB:geneid_396531"/>
<dbReference type="eggNOG" id="KOG0027">
    <property type="taxonomic scope" value="Eukaryota"/>
</dbReference>
<dbReference type="GeneTree" id="ENSGT00940000165760"/>
<dbReference type="HOGENOM" id="CLU_157356_0_0_1"/>
<dbReference type="InParanoid" id="P19753"/>
<dbReference type="OMA" id="DSFSPKM"/>
<dbReference type="OrthoDB" id="26525at2759"/>
<dbReference type="PhylomeDB" id="P19753"/>
<dbReference type="EvolutionaryTrace" id="P19753"/>
<dbReference type="PRO" id="PR:P19753"/>
<dbReference type="Proteomes" id="UP000000539">
    <property type="component" value="Chromosome 14"/>
</dbReference>
<dbReference type="Bgee" id="ENSGALG00000053246">
    <property type="expression patterns" value="Expressed in muscle tissue and 1 other cell type or tissue"/>
</dbReference>
<dbReference type="GO" id="GO:0005737">
    <property type="term" value="C:cytoplasm"/>
    <property type="evidence" value="ECO:0000318"/>
    <property type="project" value="GO_Central"/>
</dbReference>
<dbReference type="GO" id="GO:0005509">
    <property type="term" value="F:calcium ion binding"/>
    <property type="evidence" value="ECO:0000318"/>
    <property type="project" value="GO_Central"/>
</dbReference>
<dbReference type="CDD" id="cd16255">
    <property type="entry name" value="EFh_parvalbumin_beta"/>
    <property type="match status" value="1"/>
</dbReference>
<dbReference type="FunFam" id="1.10.238.10:FF:000060">
    <property type="entry name" value="Parvalbumin, thymic"/>
    <property type="match status" value="1"/>
</dbReference>
<dbReference type="Gene3D" id="1.10.238.10">
    <property type="entry name" value="EF-hand"/>
    <property type="match status" value="1"/>
</dbReference>
<dbReference type="InterPro" id="IPR011992">
    <property type="entry name" value="EF-hand-dom_pair"/>
</dbReference>
<dbReference type="InterPro" id="IPR018247">
    <property type="entry name" value="EF_Hand_1_Ca_BS"/>
</dbReference>
<dbReference type="InterPro" id="IPR002048">
    <property type="entry name" value="EF_hand_dom"/>
</dbReference>
<dbReference type="InterPro" id="IPR008080">
    <property type="entry name" value="Parvalbumin"/>
</dbReference>
<dbReference type="PANTHER" id="PTHR11653">
    <property type="entry name" value="PARVALBUMIN ALPHA"/>
    <property type="match status" value="1"/>
</dbReference>
<dbReference type="PANTHER" id="PTHR11653:SF3">
    <property type="entry name" value="PARVALBUMIN, THYMIC"/>
    <property type="match status" value="1"/>
</dbReference>
<dbReference type="Pfam" id="PF13499">
    <property type="entry name" value="EF-hand_7"/>
    <property type="match status" value="1"/>
</dbReference>
<dbReference type="PRINTS" id="PR01697">
    <property type="entry name" value="PARVALBUMIN"/>
</dbReference>
<dbReference type="SMART" id="SM00054">
    <property type="entry name" value="EFh"/>
    <property type="match status" value="2"/>
</dbReference>
<dbReference type="SUPFAM" id="SSF47473">
    <property type="entry name" value="EF-hand"/>
    <property type="match status" value="1"/>
</dbReference>
<dbReference type="PROSITE" id="PS00018">
    <property type="entry name" value="EF_HAND_1"/>
    <property type="match status" value="2"/>
</dbReference>
<dbReference type="PROSITE" id="PS50222">
    <property type="entry name" value="EF_HAND_2"/>
    <property type="match status" value="2"/>
</dbReference>
<sequence length="109" mass="11726">MAITDILSAKDIESALSSCQAADSFNYKSFFSTVGLSSKTPDQIKKVFGILDQDKSGFIEEEELQLFLKNFSSSARVLTSAETKAFLAAGDTDGDGKIGVEEFQSLVKA</sequence>
<accession>P19753</accession>
<proteinExistence type="evidence at protein level"/>
<name>PRVT_CHICK</name>
<reference key="1">
    <citation type="journal article" date="1991" name="Arch. Biochem. Biophys.">
        <title>Molecular cloning of the thymus-specific parvalbumin known as avian thymic hormone: isolation of a full length cDNA and expression of the recombinant protein in Escherichia coli.</title>
        <authorList>
            <person name="Palmisano W.A."/>
            <person name="Henzl M.T."/>
        </authorList>
    </citation>
    <scope>NUCLEOTIDE SEQUENCE [MRNA]</scope>
</reference>
<reference key="2">
    <citation type="journal article" date="1990" name="Biochimie">
        <title>The amino acid sequence of avian thymic hormone, a parvalbumin.</title>
        <authorList>
            <person name="Brewer J.M."/>
            <person name="Wunderlich J.K."/>
            <person name="Ragland W.L."/>
        </authorList>
    </citation>
    <scope>PROTEIN SEQUENCE OF 2-109</scope>
    <scope>ACETYLATION AT ALA-2</scope>
    <source>
        <tissue>Thymus</tissue>
    </source>
</reference>
<reference key="3">
    <citation type="journal article" date="1989" name="Biochem. Biophys. Res. Commun.">
        <title>Avian thymic hormone (ATH) is a parvalbumin.</title>
        <authorList>
            <person name="Brewer J.M."/>
            <person name="Wunderlich J.K."/>
            <person name="Kim D.-H."/>
            <person name="Carr M.Y."/>
            <person name="Beach G.G."/>
            <person name="Ragland W.L."/>
        </authorList>
    </citation>
    <scope>PRELIMINARY PARTIAL PROTEIN SEQUENCE</scope>
    <source>
        <tissue>Thymus</tissue>
    </source>
</reference>
<reference key="4">
    <citation type="journal article" date="1990" name="Biochem. Biophys. Res. Commun.">
        <title>Partial nucleotide sequence of the parvalbumin from chicken thymus designated 'avian thymic hormone'.</title>
        <authorList>
            <person name="Palmisano W.A."/>
            <person name="Henzl M.T."/>
        </authorList>
    </citation>
    <scope>NUCLEOTIDE SEQUENCE [MRNA] OF 41-103</scope>
</reference>
<reference key="5">
    <citation type="journal article" date="2010" name="J. Mol. Biol.">
        <title>Structure of avian thymic hormone, a high-affinity avian beta-parvalbumin, in the Ca2+-free and Ca2+-bound states.</title>
        <authorList>
            <person name="Schuermann J.P."/>
            <person name="Tan A."/>
            <person name="Tanner J.J."/>
            <person name="Henzl M.T."/>
        </authorList>
    </citation>
    <scope>STRUCTURE BY NMR OF 2-109</scope>
    <scope>X-RAY CRYSTALLOGRAPHY (1.95 ANGSTROMS)</scope>
</reference>
<protein>
    <recommendedName>
        <fullName>Parvalbumin, thymic</fullName>
    </recommendedName>
    <alternativeName>
        <fullName>Avian thymic hormone</fullName>
        <shortName>ATH</shortName>
    </alternativeName>
    <alternativeName>
        <fullName>Thymus-specific antigen T1</fullName>
    </alternativeName>
</protein>
<keyword id="KW-0002">3D-structure</keyword>
<keyword id="KW-0007">Acetylation</keyword>
<keyword id="KW-0106">Calcium</keyword>
<keyword id="KW-0903">Direct protein sequencing</keyword>
<keyword id="KW-0479">Metal-binding</keyword>
<keyword id="KW-1185">Reference proteome</keyword>
<keyword id="KW-0677">Repeat</keyword>
<comment type="function">
    <text>Appears to promote immune maturation in bone marrow cells in culture. Binds two calcium ions.</text>
</comment>
<comment type="miscellaneous">
    <text>This parvalbumin has an isoelectric point of 4.3.</text>
</comment>
<comment type="similarity">
    <text evidence="3">Belongs to the parvalbumin family.</text>
</comment>